<name>CDN2_RANGI</name>
<sequence length="15" mass="1410">GLLDVVGNLLGGLGL</sequence>
<comment type="function">
    <text>Caeridins show neither neuropeptide activity nor antibiotic activity.</text>
</comment>
<comment type="subcellular location">
    <subcellularLocation>
        <location>Secreted</location>
    </subcellularLocation>
</comment>
<comment type="tissue specificity">
    <text>Expressed by the skin parotoid and/or rostral glands.</text>
</comment>
<comment type="mass spectrometry" mass="1408.0" method="FAB" evidence="1"/>
<feature type="peptide" id="PRO_0000043761" description="Caeridin-2">
    <location>
        <begin position="1"/>
        <end position="15"/>
    </location>
</feature>
<feature type="modified residue" description="Leucine amide" evidence="1">
    <location>
        <position position="15"/>
    </location>
</feature>
<proteinExistence type="evidence at protein level"/>
<reference key="1">
    <citation type="journal article" date="1993" name="J. Chem. Res.">
        <title>Peptides from Australian frogs. The structures of the caerins and caeridins from Litoria gilleni.</title>
        <authorList>
            <person name="Waugh R.J."/>
            <person name="Stone D.J.M."/>
            <person name="Bowie J.H."/>
            <person name="Wallace J.C."/>
            <person name="Tyler M.J."/>
        </authorList>
    </citation>
    <scope>PROTEIN SEQUENCE</scope>
    <scope>AMIDATION AT LEU-15</scope>
    <scope>MASS SPECTROMETRY</scope>
    <source>
        <tissue>Parotoid gland</tissue>
    </source>
</reference>
<organism>
    <name type="scientific">Ranoidea gilleni</name>
    <name type="common">Centralian tree frog</name>
    <name type="synonym">Litoria gilleni</name>
    <dbReference type="NCBI Taxonomy" id="39405"/>
    <lineage>
        <taxon>Eukaryota</taxon>
        <taxon>Metazoa</taxon>
        <taxon>Chordata</taxon>
        <taxon>Craniata</taxon>
        <taxon>Vertebrata</taxon>
        <taxon>Euteleostomi</taxon>
        <taxon>Amphibia</taxon>
        <taxon>Batrachia</taxon>
        <taxon>Anura</taxon>
        <taxon>Neobatrachia</taxon>
        <taxon>Hyloidea</taxon>
        <taxon>Hylidae</taxon>
        <taxon>Pelodryadinae</taxon>
        <taxon>Ranoidea</taxon>
    </lineage>
</organism>
<keyword id="KW-0027">Amidation</keyword>
<keyword id="KW-0878">Amphibian defense peptide</keyword>
<keyword id="KW-0903">Direct protein sequencing</keyword>
<keyword id="KW-0964">Secreted</keyword>
<dbReference type="GO" id="GO:0005576">
    <property type="term" value="C:extracellular region"/>
    <property type="evidence" value="ECO:0007669"/>
    <property type="project" value="UniProtKB-SubCell"/>
</dbReference>
<dbReference type="GO" id="GO:0006952">
    <property type="term" value="P:defense response"/>
    <property type="evidence" value="ECO:0007669"/>
    <property type="project" value="UniProtKB-KW"/>
</dbReference>
<protein>
    <recommendedName>
        <fullName>Caeridin-2</fullName>
    </recommendedName>
</protein>
<evidence type="ECO:0000269" key="1">
    <source ref="1"/>
</evidence>
<accession>P56247</accession>